<feature type="chain" id="PRO_1000119245" description="Deoxyuridine 5'-triphosphate nucleotidohydrolase">
    <location>
        <begin position="1"/>
        <end position="155"/>
    </location>
</feature>
<feature type="binding site" evidence="1">
    <location>
        <begin position="74"/>
        <end position="76"/>
    </location>
    <ligand>
        <name>substrate</name>
    </ligand>
</feature>
<feature type="binding site" evidence="1">
    <location>
        <position position="87"/>
    </location>
    <ligand>
        <name>substrate</name>
    </ligand>
</feature>
<feature type="binding site" evidence="1">
    <location>
        <begin position="91"/>
        <end position="93"/>
    </location>
    <ligand>
        <name>substrate</name>
    </ligand>
</feature>
<sequence length="155" mass="16034">MRPVVRVIREDWADAALPLPSYETAGAAGADLRANLPPESRAEGLVLAPLGRVLVPTGLRIEIPEGFEVQIRPRSGLALKHGISLPNSPGTIDSDYRGPLGVILVNLGAEPFRVAHGDRIAQMVVAPVVQAGFELVEGLGATARGAGGFGSTGTA</sequence>
<gene>
    <name evidence="1" type="primary">dut</name>
    <name type="ordered locus">RSKD131_1939</name>
</gene>
<evidence type="ECO:0000255" key="1">
    <source>
        <dbReference type="HAMAP-Rule" id="MF_00116"/>
    </source>
</evidence>
<comment type="function">
    <text evidence="1">This enzyme is involved in nucleotide metabolism: it produces dUMP, the immediate precursor of thymidine nucleotides and it decreases the intracellular concentration of dUTP so that uracil cannot be incorporated into DNA.</text>
</comment>
<comment type="catalytic activity">
    <reaction evidence="1">
        <text>dUTP + H2O = dUMP + diphosphate + H(+)</text>
        <dbReference type="Rhea" id="RHEA:10248"/>
        <dbReference type="ChEBI" id="CHEBI:15377"/>
        <dbReference type="ChEBI" id="CHEBI:15378"/>
        <dbReference type="ChEBI" id="CHEBI:33019"/>
        <dbReference type="ChEBI" id="CHEBI:61555"/>
        <dbReference type="ChEBI" id="CHEBI:246422"/>
        <dbReference type="EC" id="3.6.1.23"/>
    </reaction>
</comment>
<comment type="cofactor">
    <cofactor evidence="1">
        <name>Mg(2+)</name>
        <dbReference type="ChEBI" id="CHEBI:18420"/>
    </cofactor>
</comment>
<comment type="pathway">
    <text evidence="1">Pyrimidine metabolism; dUMP biosynthesis; dUMP from dCTP (dUTP route): step 2/2.</text>
</comment>
<comment type="similarity">
    <text evidence="1">Belongs to the dUTPase family.</text>
</comment>
<dbReference type="EC" id="3.6.1.23" evidence="1"/>
<dbReference type="EMBL" id="CP001150">
    <property type="protein sequence ID" value="ACM01799.1"/>
    <property type="molecule type" value="Genomic_DNA"/>
</dbReference>
<dbReference type="RefSeq" id="WP_015921079.1">
    <property type="nucleotide sequence ID" value="NC_011963.1"/>
</dbReference>
<dbReference type="SMR" id="B9KL02"/>
<dbReference type="GeneID" id="67447332"/>
<dbReference type="KEGG" id="rsk:RSKD131_1939"/>
<dbReference type="HOGENOM" id="CLU_068508_1_2_5"/>
<dbReference type="UniPathway" id="UPA00610">
    <property type="reaction ID" value="UER00666"/>
</dbReference>
<dbReference type="GO" id="GO:0004170">
    <property type="term" value="F:dUTP diphosphatase activity"/>
    <property type="evidence" value="ECO:0007669"/>
    <property type="project" value="UniProtKB-UniRule"/>
</dbReference>
<dbReference type="GO" id="GO:0000287">
    <property type="term" value="F:magnesium ion binding"/>
    <property type="evidence" value="ECO:0007669"/>
    <property type="project" value="UniProtKB-UniRule"/>
</dbReference>
<dbReference type="GO" id="GO:0006226">
    <property type="term" value="P:dUMP biosynthetic process"/>
    <property type="evidence" value="ECO:0007669"/>
    <property type="project" value="UniProtKB-UniRule"/>
</dbReference>
<dbReference type="GO" id="GO:0046081">
    <property type="term" value="P:dUTP catabolic process"/>
    <property type="evidence" value="ECO:0007669"/>
    <property type="project" value="InterPro"/>
</dbReference>
<dbReference type="CDD" id="cd07557">
    <property type="entry name" value="trimeric_dUTPase"/>
    <property type="match status" value="1"/>
</dbReference>
<dbReference type="FunFam" id="2.70.40.10:FF:000002">
    <property type="entry name" value="dUTP diphosphatase"/>
    <property type="match status" value="1"/>
</dbReference>
<dbReference type="Gene3D" id="2.70.40.10">
    <property type="match status" value="1"/>
</dbReference>
<dbReference type="HAMAP" id="MF_00116">
    <property type="entry name" value="dUTPase_bact"/>
    <property type="match status" value="1"/>
</dbReference>
<dbReference type="InterPro" id="IPR008181">
    <property type="entry name" value="dUTPase"/>
</dbReference>
<dbReference type="InterPro" id="IPR029054">
    <property type="entry name" value="dUTPase-like"/>
</dbReference>
<dbReference type="InterPro" id="IPR036157">
    <property type="entry name" value="dUTPase-like_sf"/>
</dbReference>
<dbReference type="InterPro" id="IPR033704">
    <property type="entry name" value="dUTPase_trimeric"/>
</dbReference>
<dbReference type="NCBIfam" id="TIGR00576">
    <property type="entry name" value="dut"/>
    <property type="match status" value="1"/>
</dbReference>
<dbReference type="NCBIfam" id="NF001862">
    <property type="entry name" value="PRK00601.1"/>
    <property type="match status" value="1"/>
</dbReference>
<dbReference type="PANTHER" id="PTHR11241">
    <property type="entry name" value="DEOXYURIDINE 5'-TRIPHOSPHATE NUCLEOTIDOHYDROLASE"/>
    <property type="match status" value="1"/>
</dbReference>
<dbReference type="PANTHER" id="PTHR11241:SF0">
    <property type="entry name" value="DEOXYURIDINE 5'-TRIPHOSPHATE NUCLEOTIDOHYDROLASE"/>
    <property type="match status" value="1"/>
</dbReference>
<dbReference type="Pfam" id="PF00692">
    <property type="entry name" value="dUTPase"/>
    <property type="match status" value="1"/>
</dbReference>
<dbReference type="SUPFAM" id="SSF51283">
    <property type="entry name" value="dUTPase-like"/>
    <property type="match status" value="1"/>
</dbReference>
<organism>
    <name type="scientific">Cereibacter sphaeroides (strain KD131 / KCTC 12085)</name>
    <name type="common">Rhodobacter sphaeroides</name>
    <dbReference type="NCBI Taxonomy" id="557760"/>
    <lineage>
        <taxon>Bacteria</taxon>
        <taxon>Pseudomonadati</taxon>
        <taxon>Pseudomonadota</taxon>
        <taxon>Alphaproteobacteria</taxon>
        <taxon>Rhodobacterales</taxon>
        <taxon>Paracoccaceae</taxon>
        <taxon>Cereibacter</taxon>
    </lineage>
</organism>
<name>DUT_CERSK</name>
<reference key="1">
    <citation type="journal article" date="2009" name="J. Bacteriol.">
        <title>Complete genome sequence of Rhodobacter sphaeroides KD131.</title>
        <authorList>
            <person name="Lim S.-K."/>
            <person name="Kim S.J."/>
            <person name="Cha S.H."/>
            <person name="Oh Y.-K."/>
            <person name="Rhee H.-J."/>
            <person name="Kim M.-S."/>
            <person name="Lee J.K."/>
        </authorList>
    </citation>
    <scope>NUCLEOTIDE SEQUENCE [LARGE SCALE GENOMIC DNA]</scope>
    <source>
        <strain>KD131 / KCTC 12085</strain>
    </source>
</reference>
<proteinExistence type="inferred from homology"/>
<accession>B9KL02</accession>
<protein>
    <recommendedName>
        <fullName evidence="1">Deoxyuridine 5'-triphosphate nucleotidohydrolase</fullName>
        <shortName evidence="1">dUTPase</shortName>
        <ecNumber evidence="1">3.6.1.23</ecNumber>
    </recommendedName>
    <alternativeName>
        <fullName evidence="1">dUTP pyrophosphatase</fullName>
    </alternativeName>
</protein>
<keyword id="KW-0378">Hydrolase</keyword>
<keyword id="KW-0460">Magnesium</keyword>
<keyword id="KW-0479">Metal-binding</keyword>
<keyword id="KW-0546">Nucleotide metabolism</keyword>